<reference key="1">
    <citation type="journal article" date="2002" name="J. Gen. Virol.">
        <title>Genotype H: a new Amerindian genotype of hepatitis B virus revealed in Central America.</title>
        <authorList>
            <person name="Arauz-Ruiz P."/>
            <person name="Norder H."/>
            <person name="Robertson B.H."/>
            <person name="Magnius L.O."/>
        </authorList>
    </citation>
    <scope>NUCLEOTIDE SEQUENCE [GENOMIC DNA]</scope>
</reference>
<reference key="2">
    <citation type="journal article" date="1996" name="Intervirology">
        <title>Functions of the large hepatitis B virus surface protein in viral particle morphogenesis.</title>
        <authorList>
            <person name="Bruss V."/>
            <person name="Gerhardt E."/>
            <person name="Vieluf K."/>
            <person name="Wunderlich G."/>
        </authorList>
    </citation>
    <scope>REVIEW</scope>
</reference>
<reference key="3">
    <citation type="journal article" date="1998" name="Adv. Exp. Med. Biol.">
        <title>Role of glycan processing in hepatitis B virus envelope protein trafficking.</title>
        <authorList>
            <person name="Block T.M."/>
            <person name="Lu X."/>
            <person name="Mehta A."/>
            <person name="Park J."/>
            <person name="Blumberg B.S."/>
            <person name="Dwek R."/>
        </authorList>
    </citation>
    <scope>REVIEW</scope>
</reference>
<reference key="4">
    <citation type="journal article" date="2004" name="Virus Res.">
        <title>Envelopment of the hepatitis B virus nucleocapsid.</title>
        <authorList>
            <person name="Bruss V."/>
        </authorList>
    </citation>
    <scope>REVIEW</scope>
</reference>
<reference key="5">
    <citation type="journal article" date="2006" name="Cancer Sci.">
        <title>Hepatitis B virus pre-S mutants, endoplasmic reticulum stress and hepatocarcinogenesis.</title>
        <authorList>
            <person name="Wang H.C."/>
            <person name="Huang W."/>
            <person name="Lai M.D."/>
            <person name="Su I.J."/>
        </authorList>
    </citation>
    <scope>REVIEW</scope>
</reference>
<comment type="function">
    <text evidence="3">The large envelope protein exists in two topological conformations, one which is termed 'external' or Le-HBsAg and the other 'internal' or Li-HBsAg. In its external conformation the protein attaches the virus to cell receptors and thereby initiating infection. This interaction determines the species specificity and liver tropism. This attachment induces virion internalization predominantly through caveolin-mediated endocytosis. The large envelope protein also assures fusion between virion membrane and endosomal membrane. In its internal conformation the protein plays a role in virion morphogenesis and mediates the contact with the nucleocapsid like a matrix protein.</text>
</comment>
<comment type="function">
    <text evidence="3">The middle envelope protein plays an important role in the budding of the virion. It is involved in the induction of budding in a nucleocapsid independent way. In this process the majority of envelope proteins bud to form subviral lipoprotein particles of 22 nm of diameter that do not contain a nucleocapsid.</text>
</comment>
<comment type="subunit">
    <molecule>Isoform L</molecule>
    <text evidence="2">In its internal form (Li-HBsAg), interacts with the capsid protein and with the isoform S. Interacts with host chaperone CANX.</text>
</comment>
<comment type="subunit">
    <molecule>Isoform M</molecule>
    <text evidence="2">Associates with host chaperone CANX through its pre-S2 N glycan; this association may be essential for isoform M proper secretion.</text>
</comment>
<comment type="subunit">
    <molecule>Isoform S</molecule>
    <text evidence="2">Interacts with isoform L. Interacts with the antigens of satellite virus HDV (HDVAgs); this interaction is required for encapsidation of HDV genomic RNA.</text>
</comment>
<comment type="subcellular location">
    <subcellularLocation>
        <location evidence="3">Virion membrane</location>
    </subcellularLocation>
</comment>
<comment type="alternative products">
    <event type="alternative splicing"/>
    <event type="alternative initiation"/>
    <isoform>
        <id>Q8JN07-1</id>
        <name>L</name>
        <name>Large envelope protein</name>
        <name>LHB</name>
        <name>L-HBsAg</name>
        <sequence type="displayed"/>
    </isoform>
    <isoform>
        <id>Q8JN07-2</id>
        <name>M</name>
        <name>Middle envelope protein</name>
        <name>MHB</name>
        <name>M-HBsAg</name>
        <sequence type="described" ref="VSP_031432"/>
    </isoform>
    <isoform>
        <id>Q8JN07-3</id>
        <name>S</name>
        <name>Small envelope protein</name>
        <name>SHB</name>
        <name>S-HBsAg</name>
        <sequence type="described" ref="VSP_031431"/>
    </isoform>
</comment>
<comment type="domain">
    <text evidence="3">The large envelope protein is synthesized with the pre-S region at the cytosolic side of the endoplasmic reticulum and, hence will be within the virion after budding. Therefore the pre-S region is not N-glycosylated. Later a post-translational translocation of N-terminal pre-S and TM1 domains occur in about 50% of proteins at the virion surface. These molecules change their topology by an unknown mechanism, resulting in exposure of pre-S region at virion surface. For isoform M in contrast, the pre-S2 region is translocated cotranslationally to the endoplasmic reticulum lumen and is N-glycosylated.</text>
</comment>
<comment type="PTM">
    <text evidence="1 3">Isoform M is N-terminally acetylated by host at a ratio of 90%, and N-glycosylated by host at the pre-S2 region.</text>
</comment>
<comment type="PTM">
    <text evidence="3">Myristoylated.</text>
</comment>
<comment type="biotechnology">
    <text>Systematic vaccination of individuals at risk of exposure to the virus has been the main method of controlling the morbidity and mortality associated with hepatitis B. The first hepatitis B vaccine was manufactured by the purification and inactivation of HBsAg obtained from the plasma of chronic hepatitis B virus carriers. The vaccine is now produced by recombinant DNA techniques and expression of the S isoform in yeast cells. The pre-S region do not seem to induce strong enough antigenic response.</text>
</comment>
<comment type="similarity">
    <text evidence="3">Belongs to the orthohepadnavirus major surface antigen family.</text>
</comment>
<protein>
    <recommendedName>
        <fullName evidence="3">Large envelope protein</fullName>
    </recommendedName>
    <alternativeName>
        <fullName evidence="3">L glycoprotein</fullName>
    </alternativeName>
    <alternativeName>
        <fullName evidence="3">L-HBsAg</fullName>
        <shortName evidence="3">LHB</shortName>
    </alternativeName>
    <alternativeName>
        <fullName evidence="3">Large S protein</fullName>
    </alternativeName>
    <alternativeName>
        <fullName evidence="3">Large surface protein</fullName>
    </alternativeName>
    <alternativeName>
        <fullName evidence="3">Major surface antigen</fullName>
    </alternativeName>
</protein>
<feature type="initiator methionine" description="Removed; by host" evidence="3">
    <location>
        <position position="1"/>
    </location>
</feature>
<feature type="chain" id="PRO_0000319097" description="Large envelope protein" evidence="3">
    <location>
        <begin position="2"/>
        <end position="400"/>
    </location>
</feature>
<feature type="topological domain" description="Intravirion; in internal conformation" evidence="3">
    <location>
        <begin position="2"/>
        <end position="253"/>
    </location>
</feature>
<feature type="topological domain" description="Virion surface; in external conformation" evidence="3">
    <location>
        <begin position="2"/>
        <end position="181"/>
    </location>
</feature>
<feature type="transmembrane region" description="Helical; Name=TM1; Note=In external conformation" evidence="3">
    <location>
        <begin position="182"/>
        <end position="202"/>
    </location>
</feature>
<feature type="topological domain" description="Intravirion; in external conformation" evidence="3">
    <location>
        <begin position="203"/>
        <end position="253"/>
    </location>
</feature>
<feature type="transmembrane region" description="Helical; Name=TM2" evidence="3">
    <location>
        <begin position="254"/>
        <end position="274"/>
    </location>
</feature>
<feature type="topological domain" description="Virion surface" evidence="3">
    <location>
        <begin position="275"/>
        <end position="348"/>
    </location>
</feature>
<feature type="transmembrane region" description="Helical" evidence="3">
    <location>
        <begin position="349"/>
        <end position="369"/>
    </location>
</feature>
<feature type="topological domain" description="Intravirion" evidence="3">
    <location>
        <begin position="370"/>
        <end position="375"/>
    </location>
</feature>
<feature type="transmembrane region" description="Helical; Name=TM3" evidence="3">
    <location>
        <begin position="376"/>
        <end position="398"/>
    </location>
</feature>
<feature type="topological domain" description="Virion surface" evidence="3">
    <location>
        <begin position="399"/>
        <end position="400"/>
    </location>
</feature>
<feature type="region of interest" description="Pre-S" evidence="3">
    <location>
        <begin position="2"/>
        <end position="174"/>
    </location>
</feature>
<feature type="region of interest" description="Pre-S1" evidence="3">
    <location>
        <begin position="2"/>
        <end position="119"/>
    </location>
</feature>
<feature type="region of interest" description="Disordered" evidence="4">
    <location>
        <begin position="70"/>
        <end position="115"/>
    </location>
</feature>
<feature type="region of interest" description="Pre-S2" evidence="3">
    <location>
        <begin position="120"/>
        <end position="174"/>
    </location>
</feature>
<feature type="compositionally biased region" description="Polar residues" evidence="4">
    <location>
        <begin position="79"/>
        <end position="88"/>
    </location>
</feature>
<feature type="lipid moiety-binding region" description="N-myristoyl glycine; by host" evidence="3">
    <location>
        <position position="2"/>
    </location>
</feature>
<feature type="glycosylation site" description="N-linked (GlcNAc...) asparagine; by host" evidence="3">
    <location>
        <position position="320"/>
    </location>
</feature>
<feature type="splice variant" id="VSP_031431" description="In isoform S." evidence="5">
    <location>
        <begin position="1"/>
        <end position="174"/>
    </location>
</feature>
<feature type="splice variant" id="VSP_031432" description="In isoform M." evidence="5">
    <location>
        <begin position="1"/>
        <end position="119"/>
    </location>
</feature>
<feature type="modified residue" description="N-acetylmethionine" evidence="5">
    <location sequence="Q8JN07-2">
        <position position="1"/>
    </location>
</feature>
<feature type="glycosylation site" description="N-linked (GlcNAc...) asparagine" evidence="5">
    <location sequence="Q8JN07-2">
        <position position="4"/>
    </location>
</feature>
<proteinExistence type="evidence at protein level"/>
<dbReference type="EMBL" id="AY090454">
    <property type="protein sequence ID" value="AAM09040.1"/>
    <property type="molecule type" value="Genomic_DNA"/>
</dbReference>
<dbReference type="PIR" id="JQ2119">
    <property type="entry name" value="JQ2119"/>
</dbReference>
<dbReference type="PIR" id="JQ2120">
    <property type="entry name" value="JQ2120"/>
</dbReference>
<dbReference type="PIR" id="JQ2121">
    <property type="entry name" value="JQ2121"/>
</dbReference>
<dbReference type="PIR" id="JQ2122">
    <property type="entry name" value="JQ2122"/>
</dbReference>
<dbReference type="SMR" id="Q8JN07"/>
<dbReference type="GlyCosmos" id="Q8JN07">
    <property type="glycosylation" value="2 sites, No reported glycans"/>
</dbReference>
<dbReference type="Proteomes" id="UP000001182">
    <property type="component" value="Segment"/>
</dbReference>
<dbReference type="GO" id="GO:0016020">
    <property type="term" value="C:membrane"/>
    <property type="evidence" value="ECO:0007669"/>
    <property type="project" value="UniProtKB-UniRule"/>
</dbReference>
<dbReference type="GO" id="GO:0019031">
    <property type="term" value="C:viral envelope"/>
    <property type="evidence" value="ECO:0007669"/>
    <property type="project" value="UniProtKB-KW"/>
</dbReference>
<dbReference type="GO" id="GO:0055036">
    <property type="term" value="C:virion membrane"/>
    <property type="evidence" value="ECO:0007669"/>
    <property type="project" value="UniProtKB-SubCell"/>
</dbReference>
<dbReference type="GO" id="GO:0075513">
    <property type="term" value="P:caveolin-mediated endocytosis of virus by host cell"/>
    <property type="evidence" value="ECO:0007669"/>
    <property type="project" value="UniProtKB-KW"/>
</dbReference>
<dbReference type="GO" id="GO:0039654">
    <property type="term" value="P:fusion of virus membrane with host endosome membrane"/>
    <property type="evidence" value="ECO:0007669"/>
    <property type="project" value="UniProtKB-KW"/>
</dbReference>
<dbReference type="GO" id="GO:0019062">
    <property type="term" value="P:virion attachment to host cell"/>
    <property type="evidence" value="ECO:0007669"/>
    <property type="project" value="UniProtKB-UniRule"/>
</dbReference>
<dbReference type="HAMAP" id="MF_04075">
    <property type="entry name" value="HBV_HBSAG"/>
    <property type="match status" value="1"/>
</dbReference>
<dbReference type="InterPro" id="IPR000349">
    <property type="entry name" value="HBV_HBSAG"/>
</dbReference>
<dbReference type="Pfam" id="PF00695">
    <property type="entry name" value="vMSA"/>
    <property type="match status" value="1"/>
</dbReference>
<gene>
    <name evidence="3" type="primary">S</name>
</gene>
<keyword id="KW-0007">Acetylation</keyword>
<keyword id="KW-0024">Alternative initiation</keyword>
<keyword id="KW-0025">Alternative splicing</keyword>
<keyword id="KW-1166">Caveolin-mediated endocytosis of virus by host</keyword>
<keyword id="KW-1170">Fusion of virus membrane with host endosomal membrane</keyword>
<keyword id="KW-1168">Fusion of virus membrane with host membrane</keyword>
<keyword id="KW-0325">Glycoprotein</keyword>
<keyword id="KW-0945">Host-virus interaction</keyword>
<keyword id="KW-0449">Lipoprotein</keyword>
<keyword id="KW-0472">Membrane</keyword>
<keyword id="KW-0519">Myristate</keyword>
<keyword id="KW-0812">Transmembrane</keyword>
<keyword id="KW-1133">Transmembrane helix</keyword>
<keyword id="KW-1161">Viral attachment to host cell</keyword>
<keyword id="KW-0261">Viral envelope protein</keyword>
<keyword id="KW-1162">Viral penetration into host cytoplasm</keyword>
<keyword id="KW-0946">Virion</keyword>
<keyword id="KW-1164">Virus endocytosis by host</keyword>
<keyword id="KW-1160">Virus entry into host cell</keyword>
<accession>Q8JN07</accession>
<evidence type="ECO:0000250" key="1">
    <source>
        <dbReference type="UniProtKB" id="P03138"/>
    </source>
</evidence>
<evidence type="ECO:0000250" key="2">
    <source>
        <dbReference type="UniProtKB" id="P03141"/>
    </source>
</evidence>
<evidence type="ECO:0000255" key="3">
    <source>
        <dbReference type="HAMAP-Rule" id="MF_04075"/>
    </source>
</evidence>
<evidence type="ECO:0000256" key="4">
    <source>
        <dbReference type="SAM" id="MobiDB-lite"/>
    </source>
</evidence>
<evidence type="ECO:0000305" key="5"/>
<name>HBSAG_HBVH2</name>
<organismHost>
    <name type="scientific">Homo sapiens</name>
    <name type="common">Human</name>
    <dbReference type="NCBI Taxonomy" id="9606"/>
</organismHost>
<organismHost>
    <name type="scientific">Pan troglodytes</name>
    <name type="common">Chimpanzee</name>
    <dbReference type="NCBI Taxonomy" id="9598"/>
</organismHost>
<sequence length="400" mass="43763">MGAPLSTARRGMGQNLSVPNPLGFFPDHQLDPLFRANSSSPDWDFNTNKDNWPMANKVGVGGFGPGFTPPHGGLLGWSPQAQGILTTSPPDPPPASTNRRSGRKPTPVSPPLRDTHPQAMQWNSTQFHQALLDPRVRGLYFPAGGSSSETQNPVPTIASLTSSIFSKTGDPAMNMENITSGLLGPLLVLQAVCFLLTKILTIPQSLDSWWTSLNFLGVPPGCPGQNSQSPISNHLPTSCPPTCPGYRWMCLRRFIIFLFILLLCLIFLLVLLDYQGMLPVCPLLPGSTTTSTGPCKTCTTLAQGTSMFPSCCCTKPSDGNCTCIPIPSSWAFGKYLWEWASARFSWLSLLVQFVQWCVGLSPTVWLLVIWMIWYWGPNLCSILSPFIPLLPIFCYLWASI</sequence>
<organism>
    <name type="scientific">Hepatitis B virus genotype H subtype adw4 (isolate Nicaragua/1853Nic/1997)</name>
    <name type="common">HBV-H</name>
    <dbReference type="NCBI Taxonomy" id="489540"/>
    <lineage>
        <taxon>Viruses</taxon>
        <taxon>Riboviria</taxon>
        <taxon>Pararnavirae</taxon>
        <taxon>Artverviricota</taxon>
        <taxon>Revtraviricetes</taxon>
        <taxon>Blubervirales</taxon>
        <taxon>Hepadnaviridae</taxon>
        <taxon>Orthohepadnavirus</taxon>
        <taxon>Hepatitis B virus</taxon>
        <taxon>hepatitis B virus genotype H</taxon>
    </lineage>
</organism>